<organism>
    <name type="scientific">Paraclostridium bifermentans</name>
    <name type="common">Clostridium bifermentans</name>
    <dbReference type="NCBI Taxonomy" id="1490"/>
    <lineage>
        <taxon>Bacteria</taxon>
        <taxon>Bacillati</taxon>
        <taxon>Bacillota</taxon>
        <taxon>Clostridia</taxon>
        <taxon>Peptostreptococcales</taxon>
        <taxon>Peptostreptococcaceae</taxon>
        <taxon>Paraclostridium</taxon>
    </lineage>
</organism>
<comment type="function">
    <text evidence="1">Expression of the ptox operon (ntnh-orfX1-orfX2-orfX3-pmp1) in B.thuringiensis kills Anopheles but not Aedes mosquito 3rd instar larvae. The ntnh-pmp1 construct is about half as toxic.</text>
</comment>
<comment type="subunit">
    <text evidence="2">Heterodimer of OrfX1 and OrfX3; crystallizes as a dimer of heterodimers.</text>
</comment>
<comment type="induction">
    <text evidence="1">Part of both a high- and low-molecular weight complex with other proteins from the ptox and cry loci. Encoded in the ptox locus, possibly in an ntnh-orfX1-orfX2-orfX3-pmp1 operon.</text>
</comment>
<comment type="domain">
    <text evidence="2">A beta-sheet wrapped around a long alpha-helix. Structurally similar to tubular lipid-binding (TULIP) superfamily proteins (PubMed:36403098). The structure of OrfX1-OrfX3 is very similar to OrfX2 from C.botulinum type A2 (AC C1FUH4, PDB:6EKV). The structure of C.botulinum type A2 P47 (AC C1FUH7, PDB:6EKT) is very similar to OrfX3 in the OrfX1-OrfX3 complex (PubMed:36403098).</text>
</comment>
<comment type="miscellaneous">
    <text evidence="1">P.bifermentans strain Cbm (subsp. malaysia) is toxic to Anopheles mosquito 3rd instar larvae and less toxic to Aedes aegypti larvae.</text>
</comment>
<comment type="similarity">
    <text evidence="4">Belongs to the TULIP P47 family.</text>
</comment>
<comment type="caution">
    <text evidence="2">Sequence analysis predicts this to be a membrane protein, however crystallography in complex with OrfX1 shows this is not the case.</text>
</comment>
<reference evidence="5" key="1">
    <citation type="journal article" date="2019" name="Nat. Commun.">
        <title>A neurotoxin that specifically targets Anopheles mosquitoes.</title>
        <authorList>
            <person name="Contreras E."/>
            <person name="Masuyer G."/>
            <person name="Qureshi N."/>
            <person name="Chawla S."/>
            <person name="Dhillon H.S."/>
            <person name="Lee H.L."/>
            <person name="Chen J."/>
            <person name="Stenmark P."/>
            <person name="Gill S.S."/>
        </authorList>
    </citation>
    <scope>NUCLEOTIDE SEQUENCE [LARGE SCALE GENOMIC DNA]</scope>
    <scope>FUNCTION</scope>
    <scope>INDUCTION</scope>
    <scope>IDENTIFICATION BY MASS SPECTROMETRY</scope>
    <source>
        <strain>Cbm</strain>
        <plasmid>pPbmMP</plasmid>
    </source>
</reference>
<reference evidence="6" key="2">
    <citation type="journal article" date="2023" name="FEBS Lett.">
        <title>Crystal structure of the OrfX1-OrfX3 complex from the PMP1 neurotoxin gene cluster.</title>
        <authorList>
            <person name="Kosenina S."/>
            <person name="Stenmark P."/>
        </authorList>
    </citation>
    <scope>X-RAY CRYSTALLOGRAPHY (2.70 ANGSTROMS) IN COMPLEX WITH ORFX1</scope>
    <scope>SUBUNIT</scope>
    <scope>DOMAIN</scope>
</reference>
<accession>A0A5P3XKL3</accession>
<gene>
    <name evidence="3" type="primary">orfX3</name>
    <name evidence="5" type="ORF">D4A35_18125</name>
</gene>
<sequence>MIGKRQTSTLNWDTVFAVPISVVNKAIKDKKSSPENFEFEDSSGSKCKGDFGDWQIITGGDGSNIRMKIPIYNFKAELVDDKYGIFNGNGGFESGEMNIQVKLKYFPHDKISKYKDVELVDLKVRSESADPIDPVVVMLSLKNLNGFYFNFLNEFGEDLQDIIEMFFIELVKQWLTENISLFNHIFSVVNLNLYIDQYSQWSWSRPSYVSYAYTDIEGDLDKSLLGVLCMTGGRNPDLRQQKVDPHAVPESSQCGFLIYEERVLRDLLLPTLPMKFKNSTVEDYEVINASGESGQYQYILRLKKGRSVSLDRVEANGSKYDPYMTEMSISLSNDVLKLEATTETSVGMGGKVGCDTINWYKLVLAKNGNGEQTISYEEVGEPTVINYVIKEGENWVWDVIAAIIAILATAVLAIFTGGAAFFIGGIVIAIITGFIAKTPDIILNWNLETSPSIDMMLENSTSQIIWNARDIFELDYVALNGPLQLGGELTV</sequence>
<evidence type="ECO:0000269" key="1">
    <source>
    </source>
</evidence>
<evidence type="ECO:0000269" key="2">
    <source>
    </source>
</evidence>
<evidence type="ECO:0000303" key="3">
    <source>
    </source>
</evidence>
<evidence type="ECO:0000305" key="4">
    <source>
    </source>
</evidence>
<evidence type="ECO:0000312" key="5">
    <source>
        <dbReference type="EMBL" id="QEZ70853.1"/>
    </source>
</evidence>
<evidence type="ECO:0000312" key="6">
    <source>
        <dbReference type="PDB" id="8BGM"/>
    </source>
</evidence>
<evidence type="ECO:0007829" key="7">
    <source>
        <dbReference type="PDB" id="8BGM"/>
    </source>
</evidence>
<geneLocation type="plasmid">
    <name>pPbmMP</name>
</geneLocation>
<feature type="chain" id="PRO_0000457889" description="Protein OrfX3">
    <location>
        <begin position="1"/>
        <end position="491"/>
    </location>
</feature>
<feature type="strand" evidence="7">
    <location>
        <begin position="13"/>
        <end position="19"/>
    </location>
</feature>
<feature type="helix" evidence="7">
    <location>
        <begin position="20"/>
        <end position="30"/>
    </location>
</feature>
<feature type="strand" evidence="7">
    <location>
        <begin position="35"/>
        <end position="40"/>
    </location>
</feature>
<feature type="strand" evidence="7">
    <location>
        <begin position="46"/>
        <end position="51"/>
    </location>
</feature>
<feature type="strand" evidence="7">
    <location>
        <begin position="55"/>
        <end position="62"/>
    </location>
</feature>
<feature type="strand" evidence="7">
    <location>
        <begin position="64"/>
        <end position="78"/>
    </location>
</feature>
<feature type="turn" evidence="7">
    <location>
        <begin position="81"/>
        <end position="83"/>
    </location>
</feature>
<feature type="strand" evidence="7">
    <location>
        <begin position="88"/>
        <end position="107"/>
    </location>
</feature>
<feature type="strand" evidence="7">
    <location>
        <begin position="116"/>
        <end position="124"/>
    </location>
</feature>
<feature type="strand" evidence="7">
    <location>
        <begin position="137"/>
        <end position="146"/>
    </location>
</feature>
<feature type="strand" evidence="7">
    <location>
        <begin position="148"/>
        <end position="153"/>
    </location>
</feature>
<feature type="helix" evidence="7">
    <location>
        <begin position="160"/>
        <end position="178"/>
    </location>
</feature>
<feature type="helix" evidence="7">
    <location>
        <begin position="179"/>
        <end position="181"/>
    </location>
</feature>
<feature type="strand" evidence="7">
    <location>
        <begin position="187"/>
        <end position="194"/>
    </location>
</feature>
<feature type="turn" evidence="7">
    <location>
        <begin position="200"/>
        <end position="204"/>
    </location>
</feature>
<feature type="strand" evidence="7">
    <location>
        <begin position="205"/>
        <end position="214"/>
    </location>
</feature>
<feature type="strand" evidence="7">
    <location>
        <begin position="224"/>
        <end position="231"/>
    </location>
</feature>
<feature type="strand" evidence="7">
    <location>
        <begin position="253"/>
        <end position="258"/>
    </location>
</feature>
<feature type="helix" evidence="7">
    <location>
        <begin position="260"/>
        <end position="266"/>
    </location>
</feature>
<feature type="helix" evidence="7">
    <location>
        <begin position="269"/>
        <end position="271"/>
    </location>
</feature>
<feature type="helix" evidence="7">
    <location>
        <begin position="272"/>
        <end position="275"/>
    </location>
</feature>
<feature type="helix" evidence="7">
    <location>
        <begin position="281"/>
        <end position="283"/>
    </location>
</feature>
<feature type="strand" evidence="7">
    <location>
        <begin position="284"/>
        <end position="288"/>
    </location>
</feature>
<feature type="strand" evidence="7">
    <location>
        <begin position="298"/>
        <end position="302"/>
    </location>
</feature>
<feature type="strand" evidence="7">
    <location>
        <begin position="316"/>
        <end position="320"/>
    </location>
</feature>
<feature type="strand" evidence="7">
    <location>
        <begin position="323"/>
        <end position="332"/>
    </location>
</feature>
<feature type="strand" evidence="7">
    <location>
        <begin position="335"/>
        <end position="346"/>
    </location>
</feature>
<feature type="strand" evidence="7">
    <location>
        <begin position="350"/>
        <end position="366"/>
    </location>
</feature>
<feature type="strand" evidence="7">
    <location>
        <begin position="372"/>
        <end position="390"/>
    </location>
</feature>
<feature type="helix" evidence="7">
    <location>
        <begin position="397"/>
        <end position="432"/>
    </location>
</feature>
<feature type="helix" evidence="7">
    <location>
        <begin position="439"/>
        <end position="443"/>
    </location>
</feature>
<feature type="turn" evidence="7">
    <location>
        <begin position="447"/>
        <end position="449"/>
    </location>
</feature>
<feature type="helix" evidence="7">
    <location>
        <begin position="454"/>
        <end position="458"/>
    </location>
</feature>
<feature type="helix" evidence="7">
    <location>
        <begin position="461"/>
        <end position="463"/>
    </location>
</feature>
<feature type="strand" evidence="7">
    <location>
        <begin position="464"/>
        <end position="466"/>
    </location>
</feature>
<feature type="turn" evidence="7">
    <location>
        <begin position="467"/>
        <end position="469"/>
    </location>
</feature>
<feature type="strand" evidence="7">
    <location>
        <begin position="472"/>
        <end position="489"/>
    </location>
</feature>
<keyword id="KW-0002">3D-structure</keyword>
<keyword id="KW-0614">Plasmid</keyword>
<keyword id="KW-0843">Virulence</keyword>
<proteinExistence type="evidence at protein level"/>
<name>ORFX3_PARBF</name>
<dbReference type="EMBL" id="CP032455">
    <property type="protein sequence ID" value="QEZ70853.1"/>
    <property type="molecule type" value="Genomic_DNA"/>
</dbReference>
<dbReference type="RefSeq" id="WP_150887774.1">
    <property type="nucleotide sequence ID" value="NZ_CM017269.1"/>
</dbReference>
<dbReference type="PDB" id="8BGM">
    <property type="method" value="X-ray"/>
    <property type="resolution" value="2.70 A"/>
    <property type="chains" value="B/D=1-491"/>
</dbReference>
<dbReference type="PDBsum" id="8BGM"/>
<dbReference type="SMR" id="A0A5P3XKL3"/>
<dbReference type="Proteomes" id="UP000326961">
    <property type="component" value="Plasmid pPbmMP"/>
</dbReference>
<dbReference type="GO" id="GO:0090729">
    <property type="term" value="F:toxin activity"/>
    <property type="evidence" value="ECO:0000315"/>
    <property type="project" value="UniProtKB"/>
</dbReference>
<dbReference type="InterPro" id="IPR010567">
    <property type="entry name" value="Clostridium_P47"/>
</dbReference>
<dbReference type="Pfam" id="PF06597">
    <property type="entry name" value="Clostridium_P47"/>
    <property type="match status" value="1"/>
</dbReference>
<protein>
    <recommendedName>
        <fullName evidence="3">Protein OrfX3</fullName>
    </recommendedName>
</protein>